<sequence>MSGRVQKVMIPPINFIFKLLQQHTPVSIWLFEQTDIRLQGQIRGFDEFMNIVLDDAVQVDAKNNKRELGRILLKGDNITLIQAI</sequence>
<reference evidence="8" key="1">
    <citation type="journal article" date="2002" name="Nature">
        <title>The genome sequence of Schizosaccharomyces pombe.</title>
        <authorList>
            <person name="Wood V."/>
            <person name="Gwilliam R."/>
            <person name="Rajandream M.A."/>
            <person name="Lyne M.H."/>
            <person name="Lyne R."/>
            <person name="Stewart A."/>
            <person name="Sgouros J.G."/>
            <person name="Peat N."/>
            <person name="Hayles J."/>
            <person name="Baker S.G."/>
            <person name="Basham D."/>
            <person name="Bowman S."/>
            <person name="Brooks K."/>
            <person name="Brown D."/>
            <person name="Brown S."/>
            <person name="Chillingworth T."/>
            <person name="Churcher C.M."/>
            <person name="Collins M."/>
            <person name="Connor R."/>
            <person name="Cronin A."/>
            <person name="Davis P."/>
            <person name="Feltwell T."/>
            <person name="Fraser A."/>
            <person name="Gentles S."/>
            <person name="Goble A."/>
            <person name="Hamlin N."/>
            <person name="Harris D.E."/>
            <person name="Hidalgo J."/>
            <person name="Hodgson G."/>
            <person name="Holroyd S."/>
            <person name="Hornsby T."/>
            <person name="Howarth S."/>
            <person name="Huckle E.J."/>
            <person name="Hunt S."/>
            <person name="Jagels K."/>
            <person name="James K.D."/>
            <person name="Jones L."/>
            <person name="Jones M."/>
            <person name="Leather S."/>
            <person name="McDonald S."/>
            <person name="McLean J."/>
            <person name="Mooney P."/>
            <person name="Moule S."/>
            <person name="Mungall K.L."/>
            <person name="Murphy L.D."/>
            <person name="Niblett D."/>
            <person name="Odell C."/>
            <person name="Oliver K."/>
            <person name="O'Neil S."/>
            <person name="Pearson D."/>
            <person name="Quail M.A."/>
            <person name="Rabbinowitsch E."/>
            <person name="Rutherford K.M."/>
            <person name="Rutter S."/>
            <person name="Saunders D."/>
            <person name="Seeger K."/>
            <person name="Sharp S."/>
            <person name="Skelton J."/>
            <person name="Simmonds M.N."/>
            <person name="Squares R."/>
            <person name="Squares S."/>
            <person name="Stevens K."/>
            <person name="Taylor K."/>
            <person name="Taylor R.G."/>
            <person name="Tivey A."/>
            <person name="Walsh S.V."/>
            <person name="Warren T."/>
            <person name="Whitehead S."/>
            <person name="Woodward J.R."/>
            <person name="Volckaert G."/>
            <person name="Aert R."/>
            <person name="Robben J."/>
            <person name="Grymonprez B."/>
            <person name="Weltjens I."/>
            <person name="Vanstreels E."/>
            <person name="Rieger M."/>
            <person name="Schaefer M."/>
            <person name="Mueller-Auer S."/>
            <person name="Gabel C."/>
            <person name="Fuchs M."/>
            <person name="Duesterhoeft A."/>
            <person name="Fritzc C."/>
            <person name="Holzer E."/>
            <person name="Moestl D."/>
            <person name="Hilbert H."/>
            <person name="Borzym K."/>
            <person name="Langer I."/>
            <person name="Beck A."/>
            <person name="Lehrach H."/>
            <person name="Reinhardt R."/>
            <person name="Pohl T.M."/>
            <person name="Eger P."/>
            <person name="Zimmermann W."/>
            <person name="Wedler H."/>
            <person name="Wambutt R."/>
            <person name="Purnelle B."/>
            <person name="Goffeau A."/>
            <person name="Cadieu E."/>
            <person name="Dreano S."/>
            <person name="Gloux S."/>
            <person name="Lelaure V."/>
            <person name="Mottier S."/>
            <person name="Galibert F."/>
            <person name="Aves S.J."/>
            <person name="Xiang Z."/>
            <person name="Hunt C."/>
            <person name="Moore K."/>
            <person name="Hurst S.M."/>
            <person name="Lucas M."/>
            <person name="Rochet M."/>
            <person name="Gaillardin C."/>
            <person name="Tallada V.A."/>
            <person name="Garzon A."/>
            <person name="Thode G."/>
            <person name="Daga R.R."/>
            <person name="Cruzado L."/>
            <person name="Jimenez J."/>
            <person name="Sanchez M."/>
            <person name="del Rey F."/>
            <person name="Benito J."/>
            <person name="Dominguez A."/>
            <person name="Revuelta J.L."/>
            <person name="Moreno S."/>
            <person name="Armstrong J."/>
            <person name="Forsburg S.L."/>
            <person name="Cerutti L."/>
            <person name="Lowe T."/>
            <person name="McCombie W.R."/>
            <person name="Paulsen I."/>
            <person name="Potashkin J."/>
            <person name="Shpakovski G.V."/>
            <person name="Ussery D."/>
            <person name="Barrell B.G."/>
            <person name="Nurse P."/>
        </authorList>
    </citation>
    <scope>NUCLEOTIDE SEQUENCE [LARGE SCALE GENOMIC DNA]</scope>
    <source>
        <strain>972 / ATCC 24843</strain>
    </source>
</reference>
<reference evidence="7" key="2">
    <citation type="journal article" date="2006" name="Nat. Biotechnol.">
        <title>ORFeome cloning and global analysis of protein localization in the fission yeast Schizosaccharomyces pombe.</title>
        <authorList>
            <person name="Matsuyama A."/>
            <person name="Arai R."/>
            <person name="Yashiroda Y."/>
            <person name="Shirai A."/>
            <person name="Kamata A."/>
            <person name="Sekido S."/>
            <person name="Kobayashi Y."/>
            <person name="Hashimoto A."/>
            <person name="Hamamoto M."/>
            <person name="Hiraoka Y."/>
            <person name="Horinouchi S."/>
            <person name="Yoshida M."/>
        </authorList>
    </citation>
    <scope>SUBCELLULAR LOCATION [LARGE SCALE ANALYSIS]</scope>
</reference>
<reference evidence="7" key="3">
    <citation type="journal article" date="2007" name="Nucleic Acids Res.">
        <title>Proteomic analysis of the U1 snRNP of Schizosaccharomyces pombe reveals three essential organism-specific proteins.</title>
        <authorList>
            <person name="Newo A.N.S."/>
            <person name="Luetzelberger M."/>
            <person name="Bottner C.A."/>
            <person name="Wehland J."/>
            <person name="Wissing J."/>
            <person name="Jaensch L."/>
            <person name="Kaeufer N.F."/>
        </authorList>
    </citation>
    <scope>IDENTIFICATION IN U1 SNRNP BY MASS SPECTROMETRY</scope>
</reference>
<dbReference type="EMBL" id="CU329671">
    <property type="protein sequence ID" value="CAB59808.1"/>
    <property type="molecule type" value="Genomic_DNA"/>
</dbReference>
<dbReference type="PIR" id="T39333">
    <property type="entry name" value="T39333"/>
</dbReference>
<dbReference type="RefSeq" id="NP_595724.1">
    <property type="nucleotide sequence ID" value="NM_001021622.2"/>
</dbReference>
<dbReference type="PDB" id="3JB9">
    <property type="method" value="EM"/>
    <property type="resolution" value="3.60 A"/>
    <property type="chains" value="H/m=1-84"/>
</dbReference>
<dbReference type="PDB" id="9ESH">
    <property type="method" value="EM"/>
    <property type="resolution" value="3.20 A"/>
    <property type="chains" value="H=1-84"/>
</dbReference>
<dbReference type="PDB" id="9ESI">
    <property type="method" value="EM"/>
    <property type="resolution" value="3.10 A"/>
    <property type="chains" value="H=1-84"/>
</dbReference>
<dbReference type="PDBsum" id="3JB9"/>
<dbReference type="PDBsum" id="9ESH"/>
<dbReference type="PDBsum" id="9ESI"/>
<dbReference type="EMDB" id="EMD-19941"/>
<dbReference type="EMDB" id="EMD-19942"/>
<dbReference type="SMR" id="Q9USZ3"/>
<dbReference type="BioGRID" id="276165">
    <property type="interactions" value="18"/>
</dbReference>
<dbReference type="FunCoup" id="Q9USZ3">
    <property type="interactions" value="681"/>
</dbReference>
<dbReference type="IntAct" id="Q9USZ3">
    <property type="interactions" value="2"/>
</dbReference>
<dbReference type="STRING" id="284812.Q9USZ3"/>
<dbReference type="iPTMnet" id="Q9USZ3"/>
<dbReference type="PaxDb" id="4896-SPBC11G11.06c.1"/>
<dbReference type="EnsemblFungi" id="SPBC11G11.06c.1">
    <property type="protein sequence ID" value="SPBC11G11.06c.1:pep"/>
    <property type="gene ID" value="SPBC11G11.06c"/>
</dbReference>
<dbReference type="GeneID" id="2539607"/>
<dbReference type="KEGG" id="spo:2539607"/>
<dbReference type="PomBase" id="SPBC11G11.06c">
    <property type="gene designation" value="sme1"/>
</dbReference>
<dbReference type="VEuPathDB" id="FungiDB:SPBC11G11.06c"/>
<dbReference type="eggNOG" id="KOG1774">
    <property type="taxonomic scope" value="Eukaryota"/>
</dbReference>
<dbReference type="HOGENOM" id="CLU_125186_1_1_1"/>
<dbReference type="InParanoid" id="Q9USZ3"/>
<dbReference type="OMA" id="VPPINCI"/>
<dbReference type="PhylomeDB" id="Q9USZ3"/>
<dbReference type="Reactome" id="R-SPO-72163">
    <property type="pathway name" value="mRNA Splicing - Major Pathway"/>
</dbReference>
<dbReference type="EvolutionaryTrace" id="Q9USZ3"/>
<dbReference type="PRO" id="PR:Q9USZ3"/>
<dbReference type="Proteomes" id="UP000002485">
    <property type="component" value="Chromosome II"/>
</dbReference>
<dbReference type="GO" id="GO:0005829">
    <property type="term" value="C:cytosol"/>
    <property type="evidence" value="ECO:0007005"/>
    <property type="project" value="PomBase"/>
</dbReference>
<dbReference type="GO" id="GO:0005634">
    <property type="term" value="C:nucleus"/>
    <property type="evidence" value="ECO:0007005"/>
    <property type="project" value="PomBase"/>
</dbReference>
<dbReference type="GO" id="GO:0034715">
    <property type="term" value="C:pICln-Sm protein complex"/>
    <property type="evidence" value="ECO:0000318"/>
    <property type="project" value="GO_Central"/>
</dbReference>
<dbReference type="GO" id="GO:0071014">
    <property type="term" value="C:post-mRNA release spliceosomal complex"/>
    <property type="evidence" value="ECO:0000314"/>
    <property type="project" value="PomBase"/>
</dbReference>
<dbReference type="GO" id="GO:0071011">
    <property type="term" value="C:precatalytic spliceosome"/>
    <property type="evidence" value="ECO:0000318"/>
    <property type="project" value="GO_Central"/>
</dbReference>
<dbReference type="GO" id="GO:0005685">
    <property type="term" value="C:U1 snRNP"/>
    <property type="evidence" value="ECO:0000314"/>
    <property type="project" value="PomBase"/>
</dbReference>
<dbReference type="GO" id="GO:0005686">
    <property type="term" value="C:U2 snRNP"/>
    <property type="evidence" value="ECO:0000314"/>
    <property type="project" value="PomBase"/>
</dbReference>
<dbReference type="GO" id="GO:0071004">
    <property type="term" value="C:U2-type prespliceosome"/>
    <property type="evidence" value="ECO:0000266"/>
    <property type="project" value="PomBase"/>
</dbReference>
<dbReference type="GO" id="GO:0005687">
    <property type="term" value="C:U4 snRNP"/>
    <property type="evidence" value="ECO:0000318"/>
    <property type="project" value="GO_Central"/>
</dbReference>
<dbReference type="GO" id="GO:0046540">
    <property type="term" value="C:U4/U6 x U5 tri-snRNP complex"/>
    <property type="evidence" value="ECO:0000318"/>
    <property type="project" value="GO_Central"/>
</dbReference>
<dbReference type="GO" id="GO:0005682">
    <property type="term" value="C:U5 snRNP"/>
    <property type="evidence" value="ECO:0000314"/>
    <property type="project" value="PomBase"/>
</dbReference>
<dbReference type="GO" id="GO:0003723">
    <property type="term" value="F:RNA binding"/>
    <property type="evidence" value="ECO:0007669"/>
    <property type="project" value="UniProtKB-KW"/>
</dbReference>
<dbReference type="GO" id="GO:0000395">
    <property type="term" value="P:mRNA 5'-splice site recognition"/>
    <property type="evidence" value="ECO:0000305"/>
    <property type="project" value="PomBase"/>
</dbReference>
<dbReference type="GO" id="GO:0045292">
    <property type="term" value="P:mRNA cis splicing, via spliceosome"/>
    <property type="evidence" value="ECO:0000269"/>
    <property type="project" value="PomBase"/>
</dbReference>
<dbReference type="GO" id="GO:0000387">
    <property type="term" value="P:spliceosomal snRNP assembly"/>
    <property type="evidence" value="ECO:0000318"/>
    <property type="project" value="GO_Central"/>
</dbReference>
<dbReference type="CDD" id="cd01718">
    <property type="entry name" value="Sm_E"/>
    <property type="match status" value="1"/>
</dbReference>
<dbReference type="FunFam" id="2.30.30.100:FF:000031">
    <property type="entry name" value="Small nuclear ribonucleoprotein E"/>
    <property type="match status" value="1"/>
</dbReference>
<dbReference type="Gene3D" id="2.30.30.100">
    <property type="match status" value="1"/>
</dbReference>
<dbReference type="InterPro" id="IPR010920">
    <property type="entry name" value="LSM_dom_sf"/>
</dbReference>
<dbReference type="InterPro" id="IPR047575">
    <property type="entry name" value="Sm"/>
</dbReference>
<dbReference type="InterPro" id="IPR001163">
    <property type="entry name" value="Sm_dom_euk/arc"/>
</dbReference>
<dbReference type="InterPro" id="IPR027078">
    <property type="entry name" value="snRNP-E"/>
</dbReference>
<dbReference type="PANTHER" id="PTHR11193">
    <property type="entry name" value="SMALL NUCLEAR RIBONUCLEOPROTEIN E"/>
    <property type="match status" value="1"/>
</dbReference>
<dbReference type="Pfam" id="PF01423">
    <property type="entry name" value="LSM"/>
    <property type="match status" value="1"/>
</dbReference>
<dbReference type="SMART" id="SM00651">
    <property type="entry name" value="Sm"/>
    <property type="match status" value="1"/>
</dbReference>
<dbReference type="SUPFAM" id="SSF50182">
    <property type="entry name" value="Sm-like ribonucleoproteins"/>
    <property type="match status" value="1"/>
</dbReference>
<dbReference type="PROSITE" id="PS52002">
    <property type="entry name" value="SM"/>
    <property type="match status" value="1"/>
</dbReference>
<gene>
    <name evidence="8" type="primary">sme1</name>
    <name type="ORF">SPBC11G11.06c</name>
</gene>
<name>RUXE_SCHPO</name>
<protein>
    <recommendedName>
        <fullName evidence="2">Small nuclear ribonucleoprotein E</fullName>
        <shortName evidence="2">snRNP-E</shortName>
    </recommendedName>
    <alternativeName>
        <fullName>Sm protein E</fullName>
        <shortName evidence="2">Sm-E</shortName>
        <shortName evidence="2">SmE</shortName>
    </alternativeName>
</protein>
<feature type="chain" id="PRO_0000349132" description="Small nuclear ribonucleoprotein E">
    <location>
        <begin position="1"/>
        <end position="84"/>
    </location>
</feature>
<feature type="domain" description="Sm" evidence="4">
    <location>
        <begin position="13"/>
        <end position="84"/>
    </location>
</feature>
<feature type="helix" evidence="9">
    <location>
        <begin position="12"/>
        <end position="22"/>
    </location>
</feature>
<feature type="strand" evidence="9">
    <location>
        <begin position="26"/>
        <end position="28"/>
    </location>
</feature>
<feature type="strand" evidence="9">
    <location>
        <begin position="37"/>
        <end position="44"/>
    </location>
</feature>
<feature type="strand" evidence="9">
    <location>
        <begin position="51"/>
        <end position="59"/>
    </location>
</feature>
<feature type="strand" evidence="9">
    <location>
        <begin position="67"/>
        <end position="73"/>
    </location>
</feature>
<feature type="turn" evidence="9">
    <location>
        <begin position="75"/>
        <end position="77"/>
    </location>
</feature>
<feature type="strand" evidence="9">
    <location>
        <begin position="80"/>
        <end position="83"/>
    </location>
</feature>
<evidence type="ECO:0000250" key="1">
    <source>
        <dbReference type="UniProtKB" id="P62304"/>
    </source>
</evidence>
<evidence type="ECO:0000250" key="2">
    <source>
        <dbReference type="UniProtKB" id="Q12330"/>
    </source>
</evidence>
<evidence type="ECO:0000255" key="3"/>
<evidence type="ECO:0000255" key="4">
    <source>
        <dbReference type="PROSITE-ProRule" id="PRU01346"/>
    </source>
</evidence>
<evidence type="ECO:0000269" key="5">
    <source>
    </source>
</evidence>
<evidence type="ECO:0000269" key="6">
    <source>
    </source>
</evidence>
<evidence type="ECO:0000305" key="7"/>
<evidence type="ECO:0000312" key="8">
    <source>
        <dbReference type="EMBL" id="CAB59808.1"/>
    </source>
</evidence>
<evidence type="ECO:0007829" key="9">
    <source>
        <dbReference type="PDB" id="9ESI"/>
    </source>
</evidence>
<keyword id="KW-0002">3D-structure</keyword>
<keyword id="KW-0963">Cytoplasm</keyword>
<keyword id="KW-0507">mRNA processing</keyword>
<keyword id="KW-0508">mRNA splicing</keyword>
<keyword id="KW-0539">Nucleus</keyword>
<keyword id="KW-1185">Reference proteome</keyword>
<keyword id="KW-0687">Ribonucleoprotein</keyword>
<keyword id="KW-0694">RNA-binding</keyword>
<keyword id="KW-0747">Spliceosome</keyword>
<accession>Q9USZ3</accession>
<proteinExistence type="evidence at protein level"/>
<comment type="function">
    <text evidence="1">Involved in pre-mRNA splicing. Binds and is required for the stability of snRNA U1, U2, U4 and U5 which contain a highly conserved structural motif called the Sm binding site. Involved in cap modification (By similarity).</text>
</comment>
<comment type="subunit">
    <text evidence="2 6">Component of the Sm core complex, present in spliceosomal snRNP U1, U2, U4/U6 and U5. The core complex contains smb1, smd1, smd2, smd3, sme1, smf1 and smg1 (Sm proteins B, D1, D2, D3, E, F and G, respectively), and is probably a heptameric ring structure.</text>
</comment>
<comment type="subcellular location">
    <subcellularLocation>
        <location evidence="5">Cytoplasm</location>
    </subcellularLocation>
    <subcellularLocation>
        <location evidence="5">Nucleus</location>
    </subcellularLocation>
</comment>
<comment type="similarity">
    <text evidence="3">Belongs to the snRNP Sm proteins family.</text>
</comment>
<organism>
    <name type="scientific">Schizosaccharomyces pombe (strain 972 / ATCC 24843)</name>
    <name type="common">Fission yeast</name>
    <dbReference type="NCBI Taxonomy" id="284812"/>
    <lineage>
        <taxon>Eukaryota</taxon>
        <taxon>Fungi</taxon>
        <taxon>Dikarya</taxon>
        <taxon>Ascomycota</taxon>
        <taxon>Taphrinomycotina</taxon>
        <taxon>Schizosaccharomycetes</taxon>
        <taxon>Schizosaccharomycetales</taxon>
        <taxon>Schizosaccharomycetaceae</taxon>
        <taxon>Schizosaccharomyces</taxon>
    </lineage>
</organism>